<name>RF3_XYLFA</name>
<proteinExistence type="inferred from homology"/>
<keyword id="KW-0963">Cytoplasm</keyword>
<keyword id="KW-0342">GTP-binding</keyword>
<keyword id="KW-0547">Nucleotide-binding</keyword>
<keyword id="KW-0648">Protein biosynthesis</keyword>
<comment type="function">
    <text evidence="1">Increases the formation of ribosomal termination complexes and stimulates activities of RF-1 and RF-2. It binds guanine nucleotides and has strong preference for UGA stop codons. It may interact directly with the ribosome. The stimulation of RF-1 and RF-2 is significantly reduced by GTP and GDP, but not by GMP (By similarity).</text>
</comment>
<comment type="subcellular location">
    <subcellularLocation>
        <location evidence="1">Cytoplasm</location>
    </subcellularLocation>
</comment>
<comment type="similarity">
    <text evidence="2">Belongs to the TRAFAC class translation factor GTPase superfamily. Classic translation factor GTPase family. PrfC subfamily.</text>
</comment>
<comment type="sequence caution" evidence="2">
    <conflict type="erroneous initiation">
        <sequence resource="EMBL-CDS" id="AAF82987"/>
    </conflict>
</comment>
<feature type="chain" id="PRO_0000210985" description="Peptide chain release factor 3">
    <location>
        <begin position="1"/>
        <end position="534"/>
    </location>
</feature>
<feature type="domain" description="tr-type G">
    <location>
        <begin position="9"/>
        <end position="278"/>
    </location>
</feature>
<feature type="binding site" evidence="1">
    <location>
        <begin position="18"/>
        <end position="25"/>
    </location>
    <ligand>
        <name>GTP</name>
        <dbReference type="ChEBI" id="CHEBI:37565"/>
    </ligand>
</feature>
<feature type="binding site" evidence="1">
    <location>
        <begin position="86"/>
        <end position="90"/>
    </location>
    <ligand>
        <name>GTP</name>
        <dbReference type="ChEBI" id="CHEBI:37565"/>
    </ligand>
</feature>
<feature type="binding site" evidence="1">
    <location>
        <begin position="140"/>
        <end position="143"/>
    </location>
    <ligand>
        <name>GTP</name>
        <dbReference type="ChEBI" id="CHEBI:37565"/>
    </ligand>
</feature>
<reference key="1">
    <citation type="journal article" date="2000" name="Nature">
        <title>The genome sequence of the plant pathogen Xylella fastidiosa.</title>
        <authorList>
            <person name="Simpson A.J.G."/>
            <person name="Reinach F.C."/>
            <person name="Arruda P."/>
            <person name="Abreu F.A."/>
            <person name="Acencio M."/>
            <person name="Alvarenga R."/>
            <person name="Alves L.M.C."/>
            <person name="Araya J.E."/>
            <person name="Baia G.S."/>
            <person name="Baptista C.S."/>
            <person name="Barros M.H."/>
            <person name="Bonaccorsi E.D."/>
            <person name="Bordin S."/>
            <person name="Bove J.M."/>
            <person name="Briones M.R.S."/>
            <person name="Bueno M.R.P."/>
            <person name="Camargo A.A."/>
            <person name="Camargo L.E.A."/>
            <person name="Carraro D.M."/>
            <person name="Carrer H."/>
            <person name="Colauto N.B."/>
            <person name="Colombo C."/>
            <person name="Costa F.F."/>
            <person name="Costa M.C.R."/>
            <person name="Costa-Neto C.M."/>
            <person name="Coutinho L.L."/>
            <person name="Cristofani M."/>
            <person name="Dias-Neto E."/>
            <person name="Docena C."/>
            <person name="El-Dorry H."/>
            <person name="Facincani A.P."/>
            <person name="Ferreira A.J.S."/>
            <person name="Ferreira V.C.A."/>
            <person name="Ferro J.A."/>
            <person name="Fraga J.S."/>
            <person name="Franca S.C."/>
            <person name="Franco M.C."/>
            <person name="Frohme M."/>
            <person name="Furlan L.R."/>
            <person name="Garnier M."/>
            <person name="Goldman G.H."/>
            <person name="Goldman M.H.S."/>
            <person name="Gomes S.L."/>
            <person name="Gruber A."/>
            <person name="Ho P.L."/>
            <person name="Hoheisel J.D."/>
            <person name="Junqueira M.L."/>
            <person name="Kemper E.L."/>
            <person name="Kitajima J.P."/>
            <person name="Krieger J.E."/>
            <person name="Kuramae E.E."/>
            <person name="Laigret F."/>
            <person name="Lambais M.R."/>
            <person name="Leite L.C.C."/>
            <person name="Lemos E.G.M."/>
            <person name="Lemos M.V.F."/>
            <person name="Lopes S.A."/>
            <person name="Lopes C.R."/>
            <person name="Machado J.A."/>
            <person name="Machado M.A."/>
            <person name="Madeira A.M.B.N."/>
            <person name="Madeira H.M.F."/>
            <person name="Marino C.L."/>
            <person name="Marques M.V."/>
            <person name="Martins E.A.L."/>
            <person name="Martins E.M.F."/>
            <person name="Matsukuma A.Y."/>
            <person name="Menck C.F.M."/>
            <person name="Miracca E.C."/>
            <person name="Miyaki C.Y."/>
            <person name="Monteiro-Vitorello C.B."/>
            <person name="Moon D.H."/>
            <person name="Nagai M.A."/>
            <person name="Nascimento A.L.T.O."/>
            <person name="Netto L.E.S."/>
            <person name="Nhani A. Jr."/>
            <person name="Nobrega F.G."/>
            <person name="Nunes L.R."/>
            <person name="Oliveira M.A."/>
            <person name="de Oliveira M.C."/>
            <person name="de Oliveira R.C."/>
            <person name="Palmieri D.A."/>
            <person name="Paris A."/>
            <person name="Peixoto B.R."/>
            <person name="Pereira G.A.G."/>
            <person name="Pereira H.A. Jr."/>
            <person name="Pesquero J.B."/>
            <person name="Quaggio R.B."/>
            <person name="Roberto P.G."/>
            <person name="Rodrigues V."/>
            <person name="de Rosa A.J.M."/>
            <person name="de Rosa V.E. Jr."/>
            <person name="de Sa R.G."/>
            <person name="Santelli R.V."/>
            <person name="Sawasaki H.E."/>
            <person name="da Silva A.C.R."/>
            <person name="da Silva A.M."/>
            <person name="da Silva F.R."/>
            <person name="Silva W.A. Jr."/>
            <person name="da Silveira J.F."/>
            <person name="Silvestri M.L.Z."/>
            <person name="Siqueira W.J."/>
            <person name="de Souza A.A."/>
            <person name="de Souza A.P."/>
            <person name="Terenzi M.F."/>
            <person name="Truffi D."/>
            <person name="Tsai S.M."/>
            <person name="Tsuhako M.H."/>
            <person name="Vallada H."/>
            <person name="Van Sluys M.A."/>
            <person name="Verjovski-Almeida S."/>
            <person name="Vettore A.L."/>
            <person name="Zago M.A."/>
            <person name="Zatz M."/>
            <person name="Meidanis J."/>
            <person name="Setubal J.C."/>
        </authorList>
    </citation>
    <scope>NUCLEOTIDE SEQUENCE [LARGE SCALE GENOMIC DNA]</scope>
    <source>
        <strain>9a5c</strain>
    </source>
</reference>
<sequence length="534" mass="59285">MSEVVAETARRRTFAIISHPDAGKTTLTEKLLLFGGAIQMAGSVKSRKAVRHATSDWMTLEKERGISVTSSVMQFPYEGKIINLLDTPGHADFGEDTYRVLTAVDSALMVIDVAKGVEERTIKLMEVCRLRDTPIMTFINKLDREGKNPIELLDEVERVLGIQCAPVTWPIGMGKRLRGVVNLLTNEVHLYEPGRNFTRQDSTIFTSLEAPGLAERIGEQMLADLHEELELIQGASACFDPTEYLGGRQTPVFFGSGVNNFGVQPLLDFFVEHAPSPQQRDTTSRVVLPTEEKLTGFVFKIQANMDPQHRDRVAFMRVCSGRFTAGMKAFHVRSSKDLKLANALTFMASDRESVAEAFPGDVIGIHNHGRVSIGDTFTEGEVLSFTGIPSFAPELFRRACLGDPLKLKQLQKGLTQLSEEGATQFFRPLMSNDLILGAVGMLQFDVVAYRLKNEYGVDAAFEPVSITTARWVYCDNSKTLEEFREKNVTNLAVDASGELVYLAPTRVNLQLAQERAPEIHFFATREHAYAVGVD</sequence>
<protein>
    <recommendedName>
        <fullName>Peptide chain release factor 3</fullName>
        <shortName>RF-3</shortName>
    </recommendedName>
</protein>
<gene>
    <name type="primary">prfC</name>
    <name type="ordered locus">XF_0174</name>
</gene>
<accession>Q9PGX4</accession>
<organism>
    <name type="scientific">Xylella fastidiosa (strain 9a5c)</name>
    <dbReference type="NCBI Taxonomy" id="160492"/>
    <lineage>
        <taxon>Bacteria</taxon>
        <taxon>Pseudomonadati</taxon>
        <taxon>Pseudomonadota</taxon>
        <taxon>Gammaproteobacteria</taxon>
        <taxon>Lysobacterales</taxon>
        <taxon>Lysobacteraceae</taxon>
        <taxon>Xylella</taxon>
    </lineage>
</organism>
<evidence type="ECO:0000250" key="1"/>
<evidence type="ECO:0000305" key="2"/>
<dbReference type="EMBL" id="AE003849">
    <property type="protein sequence ID" value="AAF82987.1"/>
    <property type="status" value="ALT_INIT"/>
    <property type="molecule type" value="Genomic_DNA"/>
</dbReference>
<dbReference type="PIR" id="C82839">
    <property type="entry name" value="C82839"/>
</dbReference>
<dbReference type="RefSeq" id="WP_031336168.1">
    <property type="nucleotide sequence ID" value="NC_002488.3"/>
</dbReference>
<dbReference type="SMR" id="Q9PGX4"/>
<dbReference type="STRING" id="160492.XF_0174"/>
<dbReference type="KEGG" id="xfa:XF_0174"/>
<dbReference type="eggNOG" id="COG4108">
    <property type="taxonomic scope" value="Bacteria"/>
</dbReference>
<dbReference type="HOGENOM" id="CLU_002794_2_1_6"/>
<dbReference type="Proteomes" id="UP000000812">
    <property type="component" value="Chromosome"/>
</dbReference>
<dbReference type="GO" id="GO:0005829">
    <property type="term" value="C:cytosol"/>
    <property type="evidence" value="ECO:0007669"/>
    <property type="project" value="TreeGrafter"/>
</dbReference>
<dbReference type="GO" id="GO:0005525">
    <property type="term" value="F:GTP binding"/>
    <property type="evidence" value="ECO:0007669"/>
    <property type="project" value="UniProtKB-UniRule"/>
</dbReference>
<dbReference type="GO" id="GO:0003924">
    <property type="term" value="F:GTPase activity"/>
    <property type="evidence" value="ECO:0007669"/>
    <property type="project" value="InterPro"/>
</dbReference>
<dbReference type="GO" id="GO:0097216">
    <property type="term" value="F:guanosine tetraphosphate binding"/>
    <property type="evidence" value="ECO:0007669"/>
    <property type="project" value="UniProtKB-ARBA"/>
</dbReference>
<dbReference type="GO" id="GO:0016150">
    <property type="term" value="F:translation release factor activity, codon nonspecific"/>
    <property type="evidence" value="ECO:0007669"/>
    <property type="project" value="TreeGrafter"/>
</dbReference>
<dbReference type="GO" id="GO:0016149">
    <property type="term" value="F:translation release factor activity, codon specific"/>
    <property type="evidence" value="ECO:0007669"/>
    <property type="project" value="UniProtKB-UniRule"/>
</dbReference>
<dbReference type="GO" id="GO:0006449">
    <property type="term" value="P:regulation of translational termination"/>
    <property type="evidence" value="ECO:0007669"/>
    <property type="project" value="UniProtKB-UniRule"/>
</dbReference>
<dbReference type="CDD" id="cd04169">
    <property type="entry name" value="RF3"/>
    <property type="match status" value="1"/>
</dbReference>
<dbReference type="CDD" id="cd03689">
    <property type="entry name" value="RF3_II"/>
    <property type="match status" value="1"/>
</dbReference>
<dbReference type="CDD" id="cd16259">
    <property type="entry name" value="RF3_III"/>
    <property type="match status" value="1"/>
</dbReference>
<dbReference type="FunFam" id="3.30.70.3280:FF:000001">
    <property type="entry name" value="Peptide chain release factor 3"/>
    <property type="match status" value="1"/>
</dbReference>
<dbReference type="FunFam" id="3.40.50.300:FF:000542">
    <property type="entry name" value="Peptide chain release factor 3"/>
    <property type="match status" value="1"/>
</dbReference>
<dbReference type="Gene3D" id="3.40.50.300">
    <property type="entry name" value="P-loop containing nucleotide triphosphate hydrolases"/>
    <property type="match status" value="2"/>
</dbReference>
<dbReference type="Gene3D" id="3.30.70.3280">
    <property type="entry name" value="Peptide chain release factor 3, domain III"/>
    <property type="match status" value="1"/>
</dbReference>
<dbReference type="HAMAP" id="MF_00072">
    <property type="entry name" value="Rel_fac_3"/>
    <property type="match status" value="1"/>
</dbReference>
<dbReference type="InterPro" id="IPR053905">
    <property type="entry name" value="EF-G-like_DII"/>
</dbReference>
<dbReference type="InterPro" id="IPR035647">
    <property type="entry name" value="EFG_III/V"/>
</dbReference>
<dbReference type="InterPro" id="IPR031157">
    <property type="entry name" value="G_TR_CS"/>
</dbReference>
<dbReference type="InterPro" id="IPR027417">
    <property type="entry name" value="P-loop_NTPase"/>
</dbReference>
<dbReference type="InterPro" id="IPR004548">
    <property type="entry name" value="PrfC"/>
</dbReference>
<dbReference type="InterPro" id="IPR032090">
    <property type="entry name" value="RF3_C"/>
</dbReference>
<dbReference type="InterPro" id="IPR038467">
    <property type="entry name" value="RF3_dom_3_sf"/>
</dbReference>
<dbReference type="InterPro" id="IPR041732">
    <property type="entry name" value="RF3_GTP-bd"/>
</dbReference>
<dbReference type="InterPro" id="IPR005225">
    <property type="entry name" value="Small_GTP-bd"/>
</dbReference>
<dbReference type="InterPro" id="IPR000795">
    <property type="entry name" value="T_Tr_GTP-bd_dom"/>
</dbReference>
<dbReference type="InterPro" id="IPR009000">
    <property type="entry name" value="Transl_B-barrel_sf"/>
</dbReference>
<dbReference type="NCBIfam" id="TIGR00503">
    <property type="entry name" value="prfC"/>
    <property type="match status" value="1"/>
</dbReference>
<dbReference type="NCBIfam" id="NF001964">
    <property type="entry name" value="PRK00741.1"/>
    <property type="match status" value="1"/>
</dbReference>
<dbReference type="NCBIfam" id="TIGR00231">
    <property type="entry name" value="small_GTP"/>
    <property type="match status" value="1"/>
</dbReference>
<dbReference type="PANTHER" id="PTHR43556">
    <property type="entry name" value="PEPTIDE CHAIN RELEASE FACTOR RF3"/>
    <property type="match status" value="1"/>
</dbReference>
<dbReference type="PANTHER" id="PTHR43556:SF2">
    <property type="entry name" value="PEPTIDE CHAIN RELEASE FACTOR RF3"/>
    <property type="match status" value="1"/>
</dbReference>
<dbReference type="Pfam" id="PF22042">
    <property type="entry name" value="EF-G_D2"/>
    <property type="match status" value="1"/>
</dbReference>
<dbReference type="Pfam" id="PF00009">
    <property type="entry name" value="GTP_EFTU"/>
    <property type="match status" value="1"/>
</dbReference>
<dbReference type="Pfam" id="PF16658">
    <property type="entry name" value="RF3_C"/>
    <property type="match status" value="1"/>
</dbReference>
<dbReference type="PRINTS" id="PR00315">
    <property type="entry name" value="ELONGATNFCT"/>
</dbReference>
<dbReference type="SUPFAM" id="SSF54980">
    <property type="entry name" value="EF-G C-terminal domain-like"/>
    <property type="match status" value="1"/>
</dbReference>
<dbReference type="SUPFAM" id="SSF52540">
    <property type="entry name" value="P-loop containing nucleoside triphosphate hydrolases"/>
    <property type="match status" value="1"/>
</dbReference>
<dbReference type="SUPFAM" id="SSF50447">
    <property type="entry name" value="Translation proteins"/>
    <property type="match status" value="1"/>
</dbReference>
<dbReference type="PROSITE" id="PS00301">
    <property type="entry name" value="G_TR_1"/>
    <property type="match status" value="1"/>
</dbReference>
<dbReference type="PROSITE" id="PS51722">
    <property type="entry name" value="G_TR_2"/>
    <property type="match status" value="1"/>
</dbReference>